<dbReference type="EC" id="4.2.1.20" evidence="1"/>
<dbReference type="EMBL" id="FM954972">
    <property type="protein sequence ID" value="CAV19147.1"/>
    <property type="molecule type" value="Genomic_DNA"/>
</dbReference>
<dbReference type="SMR" id="B7VGU7"/>
<dbReference type="STRING" id="575788.VS_1970"/>
<dbReference type="KEGG" id="vsp:VS_1970"/>
<dbReference type="eggNOG" id="COG0133">
    <property type="taxonomic scope" value="Bacteria"/>
</dbReference>
<dbReference type="HOGENOM" id="CLU_016734_3_1_6"/>
<dbReference type="UniPathway" id="UPA00035">
    <property type="reaction ID" value="UER00044"/>
</dbReference>
<dbReference type="Proteomes" id="UP000009100">
    <property type="component" value="Chromosome 1"/>
</dbReference>
<dbReference type="GO" id="GO:0005737">
    <property type="term" value="C:cytoplasm"/>
    <property type="evidence" value="ECO:0007669"/>
    <property type="project" value="TreeGrafter"/>
</dbReference>
<dbReference type="GO" id="GO:0004834">
    <property type="term" value="F:tryptophan synthase activity"/>
    <property type="evidence" value="ECO:0007669"/>
    <property type="project" value="UniProtKB-UniRule"/>
</dbReference>
<dbReference type="CDD" id="cd06446">
    <property type="entry name" value="Trp-synth_B"/>
    <property type="match status" value="1"/>
</dbReference>
<dbReference type="FunFam" id="3.40.50.1100:FF:000001">
    <property type="entry name" value="Tryptophan synthase beta chain"/>
    <property type="match status" value="1"/>
</dbReference>
<dbReference type="FunFam" id="3.40.50.1100:FF:000004">
    <property type="entry name" value="Tryptophan synthase beta chain"/>
    <property type="match status" value="1"/>
</dbReference>
<dbReference type="Gene3D" id="3.40.50.1100">
    <property type="match status" value="2"/>
</dbReference>
<dbReference type="HAMAP" id="MF_00133">
    <property type="entry name" value="Trp_synth_beta"/>
    <property type="match status" value="1"/>
</dbReference>
<dbReference type="InterPro" id="IPR006653">
    <property type="entry name" value="Trp_synth_b_CS"/>
</dbReference>
<dbReference type="InterPro" id="IPR006654">
    <property type="entry name" value="Trp_synth_beta"/>
</dbReference>
<dbReference type="InterPro" id="IPR023026">
    <property type="entry name" value="Trp_synth_beta/beta-like"/>
</dbReference>
<dbReference type="InterPro" id="IPR001926">
    <property type="entry name" value="TrpB-like_PALP"/>
</dbReference>
<dbReference type="InterPro" id="IPR036052">
    <property type="entry name" value="TrpB-like_PALP_sf"/>
</dbReference>
<dbReference type="NCBIfam" id="TIGR00263">
    <property type="entry name" value="trpB"/>
    <property type="match status" value="1"/>
</dbReference>
<dbReference type="PANTHER" id="PTHR48077:SF3">
    <property type="entry name" value="TRYPTOPHAN SYNTHASE"/>
    <property type="match status" value="1"/>
</dbReference>
<dbReference type="PANTHER" id="PTHR48077">
    <property type="entry name" value="TRYPTOPHAN SYNTHASE-RELATED"/>
    <property type="match status" value="1"/>
</dbReference>
<dbReference type="Pfam" id="PF00291">
    <property type="entry name" value="PALP"/>
    <property type="match status" value="1"/>
</dbReference>
<dbReference type="PIRSF" id="PIRSF001413">
    <property type="entry name" value="Trp_syn_beta"/>
    <property type="match status" value="1"/>
</dbReference>
<dbReference type="SUPFAM" id="SSF53686">
    <property type="entry name" value="Tryptophan synthase beta subunit-like PLP-dependent enzymes"/>
    <property type="match status" value="1"/>
</dbReference>
<dbReference type="PROSITE" id="PS00168">
    <property type="entry name" value="TRP_SYNTHASE_BETA"/>
    <property type="match status" value="1"/>
</dbReference>
<keyword id="KW-0028">Amino-acid biosynthesis</keyword>
<keyword id="KW-0057">Aromatic amino acid biosynthesis</keyword>
<keyword id="KW-0456">Lyase</keyword>
<keyword id="KW-0663">Pyridoxal phosphate</keyword>
<keyword id="KW-0822">Tryptophan biosynthesis</keyword>
<evidence type="ECO:0000255" key="1">
    <source>
        <dbReference type="HAMAP-Rule" id="MF_00133"/>
    </source>
</evidence>
<comment type="function">
    <text evidence="1">The beta subunit is responsible for the synthesis of L-tryptophan from indole and L-serine.</text>
</comment>
<comment type="catalytic activity">
    <reaction evidence="1">
        <text>(1S,2R)-1-C-(indol-3-yl)glycerol 3-phosphate + L-serine = D-glyceraldehyde 3-phosphate + L-tryptophan + H2O</text>
        <dbReference type="Rhea" id="RHEA:10532"/>
        <dbReference type="ChEBI" id="CHEBI:15377"/>
        <dbReference type="ChEBI" id="CHEBI:33384"/>
        <dbReference type="ChEBI" id="CHEBI:57912"/>
        <dbReference type="ChEBI" id="CHEBI:58866"/>
        <dbReference type="ChEBI" id="CHEBI:59776"/>
        <dbReference type="EC" id="4.2.1.20"/>
    </reaction>
</comment>
<comment type="cofactor">
    <cofactor evidence="1">
        <name>pyridoxal 5'-phosphate</name>
        <dbReference type="ChEBI" id="CHEBI:597326"/>
    </cofactor>
</comment>
<comment type="pathway">
    <text evidence="1">Amino-acid biosynthesis; L-tryptophan biosynthesis; L-tryptophan from chorismate: step 5/5.</text>
</comment>
<comment type="subunit">
    <text evidence="1">Tetramer of two alpha and two beta chains.</text>
</comment>
<comment type="similarity">
    <text evidence="1">Belongs to the TrpB family.</text>
</comment>
<gene>
    <name evidence="1" type="primary">trpB</name>
    <name type="ordered locus">VS_1970</name>
</gene>
<proteinExistence type="inferred from homology"/>
<sequence length="396" mass="42903">MAKLDAYFGEYGGQYVPQILVPALDQLEQAFIDAQADPEFRSEFMTLLQEYAGRPTALTLTRNLTKGTKTKLYLKREDLLHGGAHKTNQVLGQALLAKRMGKQEIIAETGAGQHGVATALACALLGLKCRVYMGAKDVERQSPNVFRMKLMGAEVIPVHSGSSTLKDACNEALRDWSATYEDAHYLLGTAAGPHPFPTIVRDFQRMIGEETKNQILAREGRLPDAVIACVGGGSNAIGMFADFIEEESVRLIGVEPAGKGIDTDQHGAPLKHGKTGIFFGMKAPLMQDENGQVEESYSVSAGLDFPSVGPQHAHLNAIGRAEYDNVTDDEALEAFQLIARKEGIIAALESSHALAHAVKMAHDDPEKEQLLVVNLSGRGDKDIFSVHDILKEKGAL</sequence>
<organism>
    <name type="scientific">Vibrio atlanticus (strain LGP32)</name>
    <name type="common">Vibrio splendidus (strain Mel32)</name>
    <dbReference type="NCBI Taxonomy" id="575788"/>
    <lineage>
        <taxon>Bacteria</taxon>
        <taxon>Pseudomonadati</taxon>
        <taxon>Pseudomonadota</taxon>
        <taxon>Gammaproteobacteria</taxon>
        <taxon>Vibrionales</taxon>
        <taxon>Vibrionaceae</taxon>
        <taxon>Vibrio</taxon>
    </lineage>
</organism>
<protein>
    <recommendedName>
        <fullName evidence="1">Tryptophan synthase beta chain</fullName>
        <ecNumber evidence="1">4.2.1.20</ecNumber>
    </recommendedName>
</protein>
<feature type="chain" id="PRO_1000198760" description="Tryptophan synthase beta chain">
    <location>
        <begin position="1"/>
        <end position="396"/>
    </location>
</feature>
<feature type="modified residue" description="N6-(pyridoxal phosphate)lysine" evidence="1">
    <location>
        <position position="86"/>
    </location>
</feature>
<reference key="1">
    <citation type="submission" date="2009-02" db="EMBL/GenBank/DDBJ databases">
        <title>Vibrio splendidus str. LGP32 complete genome.</title>
        <authorList>
            <person name="Mazel D."/>
            <person name="Le Roux F."/>
        </authorList>
    </citation>
    <scope>NUCLEOTIDE SEQUENCE [LARGE SCALE GENOMIC DNA]</scope>
    <source>
        <strain>LGP32</strain>
    </source>
</reference>
<name>TRPB_VIBA3</name>
<accession>B7VGU7</accession>